<protein>
    <recommendedName>
        <fullName evidence="1">UPF0325 protein ECA1027</fullName>
    </recommendedName>
</protein>
<dbReference type="EMBL" id="BX950851">
    <property type="protein sequence ID" value="CAG73938.1"/>
    <property type="molecule type" value="Genomic_DNA"/>
</dbReference>
<dbReference type="RefSeq" id="WP_011092626.1">
    <property type="nucleotide sequence ID" value="NC_004547.2"/>
</dbReference>
<dbReference type="SMR" id="Q6D8E7"/>
<dbReference type="STRING" id="218491.ECA1027"/>
<dbReference type="KEGG" id="eca:ECA1027"/>
<dbReference type="eggNOG" id="ENOG502ZBV4">
    <property type="taxonomic scope" value="Bacteria"/>
</dbReference>
<dbReference type="HOGENOM" id="CLU_136774_0_0_6"/>
<dbReference type="OrthoDB" id="5624524at2"/>
<dbReference type="Proteomes" id="UP000007966">
    <property type="component" value="Chromosome"/>
</dbReference>
<dbReference type="HAMAP" id="MF_01519">
    <property type="entry name" value="UPF0325"/>
    <property type="match status" value="1"/>
</dbReference>
<dbReference type="InterPro" id="IPR020911">
    <property type="entry name" value="UPF0325"/>
</dbReference>
<dbReference type="NCBIfam" id="NF010213">
    <property type="entry name" value="PRK13677.1"/>
    <property type="match status" value="1"/>
</dbReference>
<dbReference type="Pfam" id="PF11944">
    <property type="entry name" value="DUF3461"/>
    <property type="match status" value="1"/>
</dbReference>
<evidence type="ECO:0000255" key="1">
    <source>
        <dbReference type="HAMAP-Rule" id="MF_01519"/>
    </source>
</evidence>
<feature type="chain" id="PRO_0000211838" description="UPF0325 protein ECA1027">
    <location>
        <begin position="1"/>
        <end position="129"/>
    </location>
</feature>
<sequence length="129" mass="15248">MYDNLKSLGITNPDDIDRYSLRQEANNDILKIYFRKDKGEFFAKSVKFKYPRQRKTIVADNSGQGYKEINEISPNLRYVIDELDKICQQEQVEVDLKRKILDDLRHLESVVSHKITEIEADLEKLTKNR</sequence>
<name>Y1027_PECAS</name>
<accession>Q6D8E7</accession>
<keyword id="KW-1185">Reference proteome</keyword>
<comment type="similarity">
    <text evidence="1">Belongs to the UPF0325 family.</text>
</comment>
<organism>
    <name type="scientific">Pectobacterium atrosepticum (strain SCRI 1043 / ATCC BAA-672)</name>
    <name type="common">Erwinia carotovora subsp. atroseptica</name>
    <dbReference type="NCBI Taxonomy" id="218491"/>
    <lineage>
        <taxon>Bacteria</taxon>
        <taxon>Pseudomonadati</taxon>
        <taxon>Pseudomonadota</taxon>
        <taxon>Gammaproteobacteria</taxon>
        <taxon>Enterobacterales</taxon>
        <taxon>Pectobacteriaceae</taxon>
        <taxon>Pectobacterium</taxon>
    </lineage>
</organism>
<gene>
    <name type="ordered locus">ECA1027</name>
</gene>
<reference key="1">
    <citation type="journal article" date="2004" name="Proc. Natl. Acad. Sci. U.S.A.">
        <title>Genome sequence of the enterobacterial phytopathogen Erwinia carotovora subsp. atroseptica and characterization of virulence factors.</title>
        <authorList>
            <person name="Bell K.S."/>
            <person name="Sebaihia M."/>
            <person name="Pritchard L."/>
            <person name="Holden M.T.G."/>
            <person name="Hyman L.J."/>
            <person name="Holeva M.C."/>
            <person name="Thomson N.R."/>
            <person name="Bentley S.D."/>
            <person name="Churcher L.J.C."/>
            <person name="Mungall K."/>
            <person name="Atkin R."/>
            <person name="Bason N."/>
            <person name="Brooks K."/>
            <person name="Chillingworth T."/>
            <person name="Clark K."/>
            <person name="Doggett J."/>
            <person name="Fraser A."/>
            <person name="Hance Z."/>
            <person name="Hauser H."/>
            <person name="Jagels K."/>
            <person name="Moule S."/>
            <person name="Norbertczak H."/>
            <person name="Ormond D."/>
            <person name="Price C."/>
            <person name="Quail M.A."/>
            <person name="Sanders M."/>
            <person name="Walker D."/>
            <person name="Whitehead S."/>
            <person name="Salmond G.P.C."/>
            <person name="Birch P.R.J."/>
            <person name="Parkhill J."/>
            <person name="Toth I.K."/>
        </authorList>
    </citation>
    <scope>NUCLEOTIDE SEQUENCE [LARGE SCALE GENOMIC DNA]</scope>
    <source>
        <strain>SCRI 1043 / ATCC BAA-672</strain>
    </source>
</reference>
<proteinExistence type="inferred from homology"/>